<name>SYFA_CLOBB</name>
<reference key="1">
    <citation type="submission" date="2008-04" db="EMBL/GenBank/DDBJ databases">
        <title>Complete sequence of Clostridium botulinum strain Eklund.</title>
        <authorList>
            <person name="Brinkac L.M."/>
            <person name="Brown J.L."/>
            <person name="Bruce D."/>
            <person name="Detter C."/>
            <person name="Munk C."/>
            <person name="Smith L.A."/>
            <person name="Smith T.J."/>
            <person name="Sutton G."/>
            <person name="Brettin T.S."/>
        </authorList>
    </citation>
    <scope>NUCLEOTIDE SEQUENCE [LARGE SCALE GENOMIC DNA]</scope>
    <source>
        <strain>Eklund 17B / Type B</strain>
    </source>
</reference>
<feature type="chain" id="PRO_1000114859" description="Phenylalanine--tRNA ligase alpha subunit">
    <location>
        <begin position="1"/>
        <end position="339"/>
    </location>
</feature>
<feature type="binding site" evidence="1">
    <location>
        <position position="254"/>
    </location>
    <ligand>
        <name>Mg(2+)</name>
        <dbReference type="ChEBI" id="CHEBI:18420"/>
        <note>shared with beta subunit</note>
    </ligand>
</feature>
<evidence type="ECO:0000255" key="1">
    <source>
        <dbReference type="HAMAP-Rule" id="MF_00281"/>
    </source>
</evidence>
<accession>B2TS55</accession>
<proteinExistence type="inferred from homology"/>
<organism>
    <name type="scientific">Clostridium botulinum (strain Eklund 17B / Type B)</name>
    <dbReference type="NCBI Taxonomy" id="935198"/>
    <lineage>
        <taxon>Bacteria</taxon>
        <taxon>Bacillati</taxon>
        <taxon>Bacillota</taxon>
        <taxon>Clostridia</taxon>
        <taxon>Eubacteriales</taxon>
        <taxon>Clostridiaceae</taxon>
        <taxon>Clostridium</taxon>
    </lineage>
</organism>
<protein>
    <recommendedName>
        <fullName evidence="1">Phenylalanine--tRNA ligase alpha subunit</fullName>
        <ecNumber evidence="1">6.1.1.20</ecNumber>
    </recommendedName>
    <alternativeName>
        <fullName evidence="1">Phenylalanyl-tRNA synthetase alpha subunit</fullName>
        <shortName evidence="1">PheRS</shortName>
    </alternativeName>
</protein>
<sequence length="339" mass="38272">MKEKLKELQELAIKQIENSIKSNELEEIRVKFLGKKGELTTILRGMGGLSPEERPLVGKLVNEAKAKVEEKLESAIKKIKDKEKAEKLAGETIDISLPGKKQVIGKSHPLELTLKNMEDIFVSMGFTIEEGPEVEYDHYNFEALNIPKNHPARSEQDTLYINDNIVLRTQTSPVQVRTMENQKPPIKMISPGKVYRSDSVDATHSPIFYQMEGLVIDKGVTFADLKGTLELFAKKMFGDKVETKFRPHHFPFTEPSAEMDATCFVCGGEGCRVCKNSGWIELLGCGMVHPNVLRNCGIDPEVYSGFAFGFGVDRMVMLKYGIDDIRLLYESDMRFLNQF</sequence>
<gene>
    <name evidence="1" type="primary">pheS</name>
    <name type="ordered locus">CLL_A2473</name>
</gene>
<keyword id="KW-0030">Aminoacyl-tRNA synthetase</keyword>
<keyword id="KW-0067">ATP-binding</keyword>
<keyword id="KW-0963">Cytoplasm</keyword>
<keyword id="KW-0436">Ligase</keyword>
<keyword id="KW-0460">Magnesium</keyword>
<keyword id="KW-0479">Metal-binding</keyword>
<keyword id="KW-0547">Nucleotide-binding</keyword>
<keyword id="KW-0648">Protein biosynthesis</keyword>
<comment type="catalytic activity">
    <reaction evidence="1">
        <text>tRNA(Phe) + L-phenylalanine + ATP = L-phenylalanyl-tRNA(Phe) + AMP + diphosphate + H(+)</text>
        <dbReference type="Rhea" id="RHEA:19413"/>
        <dbReference type="Rhea" id="RHEA-COMP:9668"/>
        <dbReference type="Rhea" id="RHEA-COMP:9699"/>
        <dbReference type="ChEBI" id="CHEBI:15378"/>
        <dbReference type="ChEBI" id="CHEBI:30616"/>
        <dbReference type="ChEBI" id="CHEBI:33019"/>
        <dbReference type="ChEBI" id="CHEBI:58095"/>
        <dbReference type="ChEBI" id="CHEBI:78442"/>
        <dbReference type="ChEBI" id="CHEBI:78531"/>
        <dbReference type="ChEBI" id="CHEBI:456215"/>
        <dbReference type="EC" id="6.1.1.20"/>
    </reaction>
</comment>
<comment type="cofactor">
    <cofactor evidence="1">
        <name>Mg(2+)</name>
        <dbReference type="ChEBI" id="CHEBI:18420"/>
    </cofactor>
    <text evidence="1">Binds 2 magnesium ions per tetramer.</text>
</comment>
<comment type="subunit">
    <text evidence="1">Tetramer of two alpha and two beta subunits.</text>
</comment>
<comment type="subcellular location">
    <subcellularLocation>
        <location evidence="1">Cytoplasm</location>
    </subcellularLocation>
</comment>
<comment type="similarity">
    <text evidence="1">Belongs to the class-II aminoacyl-tRNA synthetase family. Phe-tRNA synthetase alpha subunit type 1 subfamily.</text>
</comment>
<dbReference type="EC" id="6.1.1.20" evidence="1"/>
<dbReference type="EMBL" id="CP001056">
    <property type="protein sequence ID" value="ACD25157.1"/>
    <property type="molecule type" value="Genomic_DNA"/>
</dbReference>
<dbReference type="SMR" id="B2TS55"/>
<dbReference type="KEGG" id="cbk:CLL_A2473"/>
<dbReference type="HOGENOM" id="CLU_025086_0_1_9"/>
<dbReference type="Proteomes" id="UP000001195">
    <property type="component" value="Chromosome"/>
</dbReference>
<dbReference type="GO" id="GO:0005737">
    <property type="term" value="C:cytoplasm"/>
    <property type="evidence" value="ECO:0007669"/>
    <property type="project" value="UniProtKB-SubCell"/>
</dbReference>
<dbReference type="GO" id="GO:0005524">
    <property type="term" value="F:ATP binding"/>
    <property type="evidence" value="ECO:0007669"/>
    <property type="project" value="UniProtKB-UniRule"/>
</dbReference>
<dbReference type="GO" id="GO:0140096">
    <property type="term" value="F:catalytic activity, acting on a protein"/>
    <property type="evidence" value="ECO:0007669"/>
    <property type="project" value="UniProtKB-ARBA"/>
</dbReference>
<dbReference type="GO" id="GO:0000287">
    <property type="term" value="F:magnesium ion binding"/>
    <property type="evidence" value="ECO:0007669"/>
    <property type="project" value="UniProtKB-UniRule"/>
</dbReference>
<dbReference type="GO" id="GO:0004826">
    <property type="term" value="F:phenylalanine-tRNA ligase activity"/>
    <property type="evidence" value="ECO:0007669"/>
    <property type="project" value="UniProtKB-UniRule"/>
</dbReference>
<dbReference type="GO" id="GO:0016740">
    <property type="term" value="F:transferase activity"/>
    <property type="evidence" value="ECO:0007669"/>
    <property type="project" value="UniProtKB-ARBA"/>
</dbReference>
<dbReference type="GO" id="GO:0000049">
    <property type="term" value="F:tRNA binding"/>
    <property type="evidence" value="ECO:0007669"/>
    <property type="project" value="InterPro"/>
</dbReference>
<dbReference type="GO" id="GO:0006432">
    <property type="term" value="P:phenylalanyl-tRNA aminoacylation"/>
    <property type="evidence" value="ECO:0007669"/>
    <property type="project" value="UniProtKB-UniRule"/>
</dbReference>
<dbReference type="CDD" id="cd00496">
    <property type="entry name" value="PheRS_alpha_core"/>
    <property type="match status" value="1"/>
</dbReference>
<dbReference type="FunFam" id="3.30.930.10:FF:000003">
    <property type="entry name" value="Phenylalanine--tRNA ligase alpha subunit"/>
    <property type="match status" value="1"/>
</dbReference>
<dbReference type="Gene3D" id="3.30.930.10">
    <property type="entry name" value="Bira Bifunctional Protein, Domain 2"/>
    <property type="match status" value="1"/>
</dbReference>
<dbReference type="HAMAP" id="MF_00281">
    <property type="entry name" value="Phe_tRNA_synth_alpha1"/>
    <property type="match status" value="1"/>
</dbReference>
<dbReference type="InterPro" id="IPR006195">
    <property type="entry name" value="aa-tRNA-synth_II"/>
</dbReference>
<dbReference type="InterPro" id="IPR045864">
    <property type="entry name" value="aa-tRNA-synth_II/BPL/LPL"/>
</dbReference>
<dbReference type="InterPro" id="IPR004529">
    <property type="entry name" value="Phe-tRNA-synth_IIc_asu"/>
</dbReference>
<dbReference type="InterPro" id="IPR004188">
    <property type="entry name" value="Phe-tRNA_ligase_II_N"/>
</dbReference>
<dbReference type="InterPro" id="IPR022911">
    <property type="entry name" value="Phe_tRNA_ligase_alpha1_bac"/>
</dbReference>
<dbReference type="InterPro" id="IPR002319">
    <property type="entry name" value="Phenylalanyl-tRNA_Synthase"/>
</dbReference>
<dbReference type="InterPro" id="IPR010978">
    <property type="entry name" value="tRNA-bd_arm"/>
</dbReference>
<dbReference type="NCBIfam" id="TIGR00468">
    <property type="entry name" value="pheS"/>
    <property type="match status" value="1"/>
</dbReference>
<dbReference type="PANTHER" id="PTHR11538:SF41">
    <property type="entry name" value="PHENYLALANINE--TRNA LIGASE, MITOCHONDRIAL"/>
    <property type="match status" value="1"/>
</dbReference>
<dbReference type="PANTHER" id="PTHR11538">
    <property type="entry name" value="PHENYLALANYL-TRNA SYNTHETASE"/>
    <property type="match status" value="1"/>
</dbReference>
<dbReference type="Pfam" id="PF02912">
    <property type="entry name" value="Phe_tRNA-synt_N"/>
    <property type="match status" value="1"/>
</dbReference>
<dbReference type="Pfam" id="PF01409">
    <property type="entry name" value="tRNA-synt_2d"/>
    <property type="match status" value="1"/>
</dbReference>
<dbReference type="SUPFAM" id="SSF55681">
    <property type="entry name" value="Class II aaRS and biotin synthetases"/>
    <property type="match status" value="1"/>
</dbReference>
<dbReference type="SUPFAM" id="SSF46589">
    <property type="entry name" value="tRNA-binding arm"/>
    <property type="match status" value="1"/>
</dbReference>
<dbReference type="PROSITE" id="PS50862">
    <property type="entry name" value="AA_TRNA_LIGASE_II"/>
    <property type="match status" value="1"/>
</dbReference>